<sequence length="325" mass="35317">MLLAPGDVIKRSSEELKQRQIQINLVDWAESEGGKEDKTEPKEESKAEGSKDGEGTQSESGQKEEGGKETKDADVDRRIHTAVGSGSSTKGLGERANENADRGDGKVGGGGGDADAGVGATGTNGRRWVVLTEEIARAIESKYGTKIDVYRDEVPAQIIEVERSLQKELGISREGVAEQTERLRDLRRKEKNGTHAKAVERGGRKQRKKTHGDAQREGVEEEKTSEEPARIGITIEGVMSQKKLLSMIGGVERKMAPIGARESAVMLVSNSIKDVMRATAYFTAPTGDPHWKEVAREASKKKNILAYTSTGGDAKTEFLHLIDHL</sequence>
<evidence type="ECO:0000250" key="1">
    <source>
        <dbReference type="UniProtKB" id="Q98829"/>
    </source>
</evidence>
<evidence type="ECO:0000256" key="2">
    <source>
        <dbReference type="SAM" id="MobiDB-lite"/>
    </source>
</evidence>
<evidence type="ECO:0000305" key="3"/>
<gene>
    <name type="primary">Segment-9</name>
</gene>
<proteinExistence type="inferred from homology"/>
<organism>
    <name type="scientific">Bluetongue virus 17 (isolate USA)</name>
    <name type="common">BTV 17</name>
    <dbReference type="NCBI Taxonomy" id="33718"/>
    <lineage>
        <taxon>Viruses</taxon>
        <taxon>Riboviria</taxon>
        <taxon>Orthornavirae</taxon>
        <taxon>Duplornaviricota</taxon>
        <taxon>Resentoviricetes</taxon>
        <taxon>Reovirales</taxon>
        <taxon>Sedoreoviridae</taxon>
        <taxon>Orbivirus</taxon>
        <taxon>Bluetongue virus</taxon>
    </lineage>
</organism>
<keyword id="KW-0067">ATP-binding</keyword>
<keyword id="KW-0167">Capsid protein</keyword>
<keyword id="KW-0378">Hydrolase</keyword>
<keyword id="KW-1153">Inner capsid protein</keyword>
<keyword id="KW-0547">Nucleotide-binding</keyword>
<keyword id="KW-0946">Virion</keyword>
<protein>
    <recommendedName>
        <fullName>Helicase VP6-A</fullName>
        <ecNumber evidence="1">3.6.4.13</ecNumber>
    </recommendedName>
    <alternativeName>
        <fullName>Minor inner core protein VP6</fullName>
    </alternativeName>
</protein>
<feature type="chain" id="PRO_0000222726" description="Helicase VP6-A">
    <location>
        <begin position="1"/>
        <end position="325"/>
    </location>
</feature>
<feature type="region of interest" description="Disordered" evidence="2">
    <location>
        <begin position="1"/>
        <end position="122"/>
    </location>
</feature>
<feature type="region of interest" description="Disordered" evidence="2">
    <location>
        <begin position="185"/>
        <end position="230"/>
    </location>
</feature>
<feature type="compositionally biased region" description="Basic and acidic residues" evidence="2">
    <location>
        <begin position="8"/>
        <end position="18"/>
    </location>
</feature>
<feature type="compositionally biased region" description="Basic and acidic residues" evidence="2">
    <location>
        <begin position="32"/>
        <end position="54"/>
    </location>
</feature>
<feature type="compositionally biased region" description="Basic and acidic residues" evidence="2">
    <location>
        <begin position="61"/>
        <end position="79"/>
    </location>
</feature>
<feature type="compositionally biased region" description="Basic and acidic residues" evidence="2">
    <location>
        <begin position="92"/>
        <end position="105"/>
    </location>
</feature>
<feature type="compositionally biased region" description="Gly residues" evidence="2">
    <location>
        <begin position="106"/>
        <end position="122"/>
    </location>
</feature>
<feature type="compositionally biased region" description="Basic and acidic residues" evidence="2">
    <location>
        <begin position="185"/>
        <end position="203"/>
    </location>
</feature>
<feature type="compositionally biased region" description="Basic and acidic residues" evidence="2">
    <location>
        <begin position="211"/>
        <end position="229"/>
    </location>
</feature>
<feature type="binding site" evidence="1">
    <location>
        <position position="106"/>
    </location>
    <ligand>
        <name>ATP</name>
        <dbReference type="ChEBI" id="CHEBI:30616"/>
    </ligand>
</feature>
<organismHost>
    <name type="scientific">Antilocapra americana</name>
    <name type="common">Pronghorn</name>
    <dbReference type="NCBI Taxonomy" id="9891"/>
</organismHost>
<organismHost>
    <name type="scientific">Bos taurus</name>
    <name type="common">Bovine</name>
    <dbReference type="NCBI Taxonomy" id="9913"/>
</organismHost>
<organismHost>
    <name type="scientific">Capra hircus</name>
    <name type="common">Goat</name>
    <dbReference type="NCBI Taxonomy" id="9925"/>
</organismHost>
<organismHost>
    <name type="scientific">Culicoides variipennis</name>
    <name type="common">Biting midge</name>
    <dbReference type="NCBI Taxonomy" id="46212"/>
</organismHost>
<organismHost>
    <name type="scientific">Ovis aries</name>
    <name type="common">Sheep</name>
    <dbReference type="NCBI Taxonomy" id="9940"/>
</organismHost>
<dbReference type="EC" id="3.6.4.13" evidence="1"/>
<dbReference type="EMBL" id="L08672">
    <property type="protein sequence ID" value="AAA42821.1"/>
    <property type="molecule type" value="Genomic_RNA"/>
</dbReference>
<dbReference type="SMR" id="P32935"/>
<dbReference type="GO" id="GO:0039625">
    <property type="term" value="C:viral inner capsid"/>
    <property type="evidence" value="ECO:0007669"/>
    <property type="project" value="UniProtKB-KW"/>
</dbReference>
<dbReference type="GO" id="GO:0005524">
    <property type="term" value="F:ATP binding"/>
    <property type="evidence" value="ECO:0007669"/>
    <property type="project" value="UniProtKB-KW"/>
</dbReference>
<dbReference type="GO" id="GO:0016787">
    <property type="term" value="F:hydrolase activity"/>
    <property type="evidence" value="ECO:0007669"/>
    <property type="project" value="UniProtKB-KW"/>
</dbReference>
<dbReference type="GO" id="GO:0005198">
    <property type="term" value="F:structural molecule activity"/>
    <property type="evidence" value="ECO:0007669"/>
    <property type="project" value="InterPro"/>
</dbReference>
<dbReference type="InterPro" id="IPR001399">
    <property type="entry name" value="Orbi_VP6"/>
</dbReference>
<dbReference type="Pfam" id="PF01516">
    <property type="entry name" value="Orbi_VP6"/>
    <property type="match status" value="1"/>
</dbReference>
<dbReference type="PRINTS" id="PR00902">
    <property type="entry name" value="VP6CAPSID"/>
</dbReference>
<reference key="1">
    <citation type="journal article" date="1992" name="Virus Res.">
        <title>Comparative sequence analyses of the cognate structural protein VP6 genes of five US bluetongue viruses.</title>
        <authorList>
            <person name="Hwang G.-Y."/>
            <person name="Chiou J.-F."/>
            <person name="Yang Y.-Y."/>
            <person name="Li J.K.-K."/>
        </authorList>
    </citation>
    <scope>NUCLEOTIDE SEQUENCE [GENOMIC RNA]</scope>
</reference>
<comment type="function">
    <text evidence="1">ATP dependent RNA helicase essential for RNA packaging and viral transcription. Possesses ss- and dsRNA-binding capacity.</text>
</comment>
<comment type="catalytic activity">
    <reaction evidence="1">
        <text>ATP + H2O = ADP + phosphate + H(+)</text>
        <dbReference type="Rhea" id="RHEA:13065"/>
        <dbReference type="ChEBI" id="CHEBI:15377"/>
        <dbReference type="ChEBI" id="CHEBI:15378"/>
        <dbReference type="ChEBI" id="CHEBI:30616"/>
        <dbReference type="ChEBI" id="CHEBI:43474"/>
        <dbReference type="ChEBI" id="CHEBI:456216"/>
        <dbReference type="EC" id="3.6.4.13"/>
    </reaction>
</comment>
<comment type="subunit">
    <text evidence="1">Homohexamer.</text>
</comment>
<comment type="subcellular location">
    <subcellularLocation>
        <location>Virion</location>
    </subcellularLocation>
    <text>Inner capsid.</text>
</comment>
<comment type="similarity">
    <text evidence="3">Belongs to the orbivirus VP6 family.</text>
</comment>
<name>VP6_BTV17</name>
<accession>P32935</accession>